<reference key="1">
    <citation type="journal article" date="1985" name="Virology">
        <title>Complete sequences of the glycoproteins and M RNA of Punta Toro phlebovirus compared to those of Rift Valley fever virus.</title>
        <authorList>
            <person name="Ihara T."/>
            <person name="Smith J."/>
            <person name="Dalrymple J.M."/>
            <person name="Bishop D.H.L."/>
        </authorList>
    </citation>
    <scope>NUCLEOTIDE SEQUENCE [GENOMIC RNA]</scope>
</reference>
<reference key="2">
    <citation type="journal article" date="2011" name="Cell Host Microbe">
        <title>DC-SIGN as a receptor for phleboviruses.</title>
        <authorList>
            <person name="Lozach P.Y."/>
            <person name="Kuehbacher A."/>
            <person name="Meier R."/>
            <person name="Mancini R."/>
            <person name="Bitto D."/>
            <person name="Bouloy M."/>
            <person name="Helenius A."/>
        </authorList>
    </citation>
    <scope>FUNCTION (GLYCOPROTEIN N)</scope>
    <scope>FUNCTION (GLYCOPROTEIN C)</scope>
</reference>
<organismHost>
    <name type="scientific">Homo sapiens</name>
    <name type="common">Human</name>
    <dbReference type="NCBI Taxonomy" id="9606"/>
</organismHost>
<organismHost>
    <name type="scientific">Phlebotomus papatasi</name>
    <name type="common">Sandfly</name>
    <dbReference type="NCBI Taxonomy" id="29031"/>
</organismHost>
<comment type="function">
    <molecule>Glycoprotein N</molecule>
    <text evidence="1 2 3 6">Structural component of the virion that interacts with glycoprotein C (By similarity). It shields the hydrophobic fusion loops of the glycoprotein C, preventing premature fusion (By similarity). The glycoprotein protrusions are arranged on an icosahedral lattice, with T=12 triangulation (By similarity). They are able to attach the virion to the host cell receptor CD209/DC-SIGN and to promote fusion of membranes with the late endosome after endocytosis of the virion (PubMed:21767814). Plays a role in the packaging of ribonucleoproteins and polymerase during virus assembly (By similarity).</text>
</comment>
<comment type="function">
    <molecule>Glycoprotein C</molecule>
    <text evidence="1 2 6">Structural component of the virion that interacts with glycoprotein N (By similarity). Acts as a class II fusion protein that is activated upon acidification and subsequent repositioning of the glycoprotein N. The glycoprotein protrusions are arranged on an icosahedral lattice, with T=12 triangulation (By similarity). They are able to attach the virion to the host cell receptor CD209/DC-SIGN and to promote fusion of membranes with the late endosome after endocytosis of the virion (PubMed:21767814).</text>
</comment>
<comment type="function">
    <molecule>NSm-Gn protein</molecule>
    <text evidence="3">Plays a role for virus dissemination in mosquitoes.</text>
</comment>
<comment type="subunit">
    <molecule>Glycoprotein N</molecule>
    <text evidence="1 3">Heterodimer with glycoprotein C (By similarity). Interacts with nucleocapsid protein N and with the polymerase L in order to package them into virus particles (By similarity).</text>
</comment>
<comment type="subunit">
    <molecule>Glycoprotein C</molecule>
    <text evidence="1 2">Heterodimer with glycoprotein C. Homotrimer (postfusion) (By similarity). Interacts with nucleocapsid protein N and with the polymerase L in order to package them into virus particles. Interacts with host E3 ubiquitin-protein ligase UBR4; this interaction is important for viral RNA production (By similarity).</text>
</comment>
<comment type="subcellular location">
    <molecule>Glycoprotein N</molecule>
    <subcellularLocation>
        <location evidence="2">Virion membrane</location>
        <topology evidence="2">Single-pass type I membrane protein</topology>
    </subcellularLocation>
    <subcellularLocation>
        <location evidence="2">Host Golgi apparatus membrane</location>
        <topology evidence="2">Single-pass type I membrane protein</topology>
    </subcellularLocation>
    <subcellularLocation>
        <location evidence="2">Host endoplasmic reticulum membrane</location>
        <topology evidence="2">Single-pass type I membrane protein</topology>
    </subcellularLocation>
    <text evidence="2">Interaction between Glycoprotein N and Glycoprotein C is essential for proper targeting of Glycoprotein C to the Golgi complex, where virion budding occurs.</text>
</comment>
<comment type="subcellular location">
    <molecule>Glycoprotein C</molecule>
    <subcellularLocation>
        <location evidence="2">Virion membrane</location>
        <topology evidence="2">Single-pass type I membrane protein</topology>
    </subcellularLocation>
    <subcellularLocation>
        <location evidence="2">Host Golgi apparatus membrane</location>
        <topology evidence="2">Single-pass type I membrane protein</topology>
    </subcellularLocation>
    <text evidence="2">Interaction between Glycoprotein N and Glycoprotein C is essential for proper targeting of Glycoprotein C to the Golgi complex, where virion budding occurs.</text>
</comment>
<comment type="domain">
    <molecule>Glycoprotein N</molecule>
    <text evidence="2">Contains a Golgi retention signal on its C-terminus. The cytoplasmic tail specifically interacts with the ribonucleoproteins and is critical for genome packaging.</text>
</comment>
<comment type="PTM">
    <molecule>Envelopment polyprotein</molecule>
    <text evidence="3">Specific enzymatic cleavages in vivo yield mature proteins including NSm protein, Glycoprotein C, and Glycoprotein N.</text>
</comment>
<comment type="PTM">
    <molecule>Glycoprotein N</molecule>
    <text evidence="3">Glycosylated. The glycans can attach to host CD209/DC-SIGN, and may play a role in virus entry into dendritic cells.</text>
</comment>
<comment type="PTM">
    <molecule>Glycoprotein C</molecule>
    <text evidence="3">Glycosylated. The glycans can attach to host CD209/DC-SIGN, and may play a role in virus entry into dendritic cells.</text>
</comment>
<comment type="PTM">
    <molecule>Glycoprotein C</molecule>
    <text evidence="2">Palmitoylated.</text>
</comment>
<comment type="similarity">
    <text evidence="7">Belongs to the phlebovirus envelope glycoprotein family.</text>
</comment>
<protein>
    <recommendedName>
        <fullName>Envelopment polyprotein</fullName>
    </recommendedName>
    <alternativeName>
        <fullName>M polyprotein</fullName>
    </alternativeName>
    <component>
        <recommendedName>
            <fullName evidence="3">NSm-Gn protein</fullName>
        </recommendedName>
    </component>
    <component>
        <recommendedName>
            <fullName evidence="3">Glycoprotein N</fullName>
            <shortName>Gn</shortName>
        </recommendedName>
        <alternativeName>
            <fullName>Glycoprotein G1</fullName>
        </alternativeName>
    </component>
    <component>
        <recommendedName>
            <fullName evidence="3">Glycoprotein C</fullName>
            <shortName>Gc</shortName>
        </recommendedName>
        <alternativeName>
            <fullName>Glycoprotein G2</fullName>
        </alternativeName>
    </component>
</protein>
<gene>
    <name type="primary">GP</name>
</gene>
<evidence type="ECO:0000250" key="1">
    <source>
        <dbReference type="UniProtKB" id="P03518"/>
    </source>
</evidence>
<evidence type="ECO:0000250" key="2">
    <source>
        <dbReference type="UniProtKB" id="P09613"/>
    </source>
</evidence>
<evidence type="ECO:0000250" key="3">
    <source>
        <dbReference type="UniProtKB" id="P21401"/>
    </source>
</evidence>
<evidence type="ECO:0000250" key="4">
    <source>
        <dbReference type="UniProtKB" id="R4V2Q5"/>
    </source>
</evidence>
<evidence type="ECO:0000255" key="5"/>
<evidence type="ECO:0000269" key="6">
    <source>
    </source>
</evidence>
<evidence type="ECO:0000305" key="7"/>
<feature type="signal peptide" evidence="5">
    <location>
        <begin position="1"/>
        <end position="17"/>
    </location>
</feature>
<feature type="chain" id="PRO_0000247008" description="Envelopment polyprotein">
    <location>
        <begin position="18"/>
        <end position="1313"/>
    </location>
</feature>
<feature type="chain" id="PRO_0000036844" description="NSm-Gn protein">
    <location>
        <begin position="18"/>
        <end position="270"/>
    </location>
</feature>
<feature type="chain" id="PRO_0000036845" description="Glycoprotein N" evidence="5">
    <location>
        <begin position="271"/>
        <end position="809"/>
    </location>
</feature>
<feature type="chain" id="PRO_0000036846" description="Glycoprotein C" evidence="5">
    <location>
        <begin position="810"/>
        <end position="1313"/>
    </location>
</feature>
<feature type="topological domain" description="Lumenal" evidence="5">
    <location>
        <begin position="18"/>
        <end position="712"/>
    </location>
</feature>
<feature type="transmembrane region" description="Helical" evidence="5">
    <location>
        <begin position="713"/>
        <end position="733"/>
    </location>
</feature>
<feature type="topological domain" description="Cytoplasmic" evidence="2">
    <location>
        <begin position="734"/>
        <end position="791"/>
    </location>
</feature>
<feature type="topological domain" description="Lumenal" evidence="5">
    <location>
        <begin position="810"/>
        <end position="1278"/>
    </location>
</feature>
<feature type="transmembrane region" description="Helical" evidence="5">
    <location>
        <begin position="1279"/>
        <end position="1299"/>
    </location>
</feature>
<feature type="topological domain" description="Cytoplasmic" evidence="5">
    <location>
        <begin position="1300"/>
        <end position="1313"/>
    </location>
</feature>
<feature type="region of interest" description="Internal signal sequence for glycoprotein N" evidence="1">
    <location>
        <begin position="250"/>
        <end position="270"/>
    </location>
</feature>
<feature type="region of interest" description="Golgi retention signal" evidence="2">
    <location>
        <begin position="731"/>
        <end position="773"/>
    </location>
</feature>
<feature type="region of interest" description="Important for correct targeting of the glycoproteins to the Golgi complex but not for heterodimerization" evidence="2">
    <location>
        <begin position="769"/>
        <end position="773"/>
    </location>
</feature>
<feature type="region of interest" description="Internal signal sequence for glycoprotein C" evidence="2">
    <location>
        <begin position="793"/>
        <end position="809"/>
    </location>
</feature>
<feature type="region of interest" description="Fusion loop" evidence="4">
    <location>
        <begin position="896"/>
        <end position="902"/>
    </location>
</feature>
<feature type="region of interest" description="Fusion loop" evidence="3">
    <location>
        <begin position="938"/>
        <end position="949"/>
    </location>
</feature>
<feature type="coiled-coil region" evidence="5">
    <location>
        <begin position="178"/>
        <end position="237"/>
    </location>
</feature>
<feature type="site" description="Cleavage; by host signal peptidase" evidence="3">
    <location>
        <begin position="271"/>
        <end position="272"/>
    </location>
</feature>
<feature type="site" description="Cleavage; by host signal peptidase" evidence="3">
    <location>
        <begin position="809"/>
        <end position="810"/>
    </location>
</feature>
<feature type="site" description="Important for glycoprotein C and glycoprotein N subcellular location" evidence="2">
    <location>
        <position position="1311"/>
    </location>
</feature>
<feature type="glycosylation site" description="N-linked (GlcNAc...) asparagine; by host" evidence="5">
    <location>
        <position position="76"/>
    </location>
</feature>
<feature type="glycosylation site" description="N-linked (GlcNAc...) asparagine; by host" evidence="5">
    <location>
        <position position="102"/>
    </location>
</feature>
<feature type="glycosylation site" description="N-linked (GlcNAc...) asparagine; by host" evidence="5">
    <location>
        <position position="496"/>
    </location>
</feature>
<feature type="glycosylation site" description="N-linked (GlcNAc...) asparagine; by host" evidence="1">
    <location>
        <position position="1154"/>
    </location>
</feature>
<feature type="glycosylation site" description="N-linked (GlcNAc...) asparagine; by host" evidence="5">
    <location>
        <position position="1243"/>
    </location>
</feature>
<feature type="disulfide bond" evidence="1">
    <location>
        <begin position="303"/>
        <end position="312"/>
    </location>
</feature>
<feature type="disulfide bond" evidence="1">
    <location>
        <begin position="352"/>
        <end position="362"/>
    </location>
</feature>
<feature type="disulfide bond" evidence="1">
    <location>
        <begin position="373"/>
        <end position="404"/>
    </location>
</feature>
<feature type="disulfide bond" evidence="1">
    <location>
        <begin position="394"/>
        <end position="407"/>
    </location>
</feature>
<feature type="disulfide bond" evidence="1">
    <location>
        <begin position="432"/>
        <end position="579"/>
    </location>
</feature>
<feature type="disulfide bond" evidence="1">
    <location>
        <begin position="450"/>
        <end position="460"/>
    </location>
</feature>
<feature type="disulfide bond" evidence="1">
    <location>
        <begin position="501"/>
        <end position="557"/>
    </location>
</feature>
<feature type="disulfide bond" evidence="1">
    <location>
        <begin position="525"/>
        <end position="536"/>
    </location>
</feature>
<feature type="disulfide bond" evidence="1">
    <location>
        <begin position="543"/>
        <end position="548"/>
    </location>
</feature>
<feature type="disulfide bond" evidence="1">
    <location>
        <begin position="602"/>
        <end position="605"/>
    </location>
</feature>
<feature type="disulfide bond" evidence="1">
    <location>
        <begin position="609"/>
        <end position="679"/>
    </location>
</feature>
<feature type="disulfide bond" evidence="1">
    <location>
        <begin position="629"/>
        <end position="634"/>
    </location>
</feature>
<feature type="disulfide bond" evidence="3">
    <location>
        <begin position="810"/>
        <end position="850"/>
    </location>
</feature>
<feature type="disulfide bond" evidence="3">
    <location>
        <begin position="823"/>
        <end position="832"/>
    </location>
</feature>
<feature type="disulfide bond" evidence="3">
    <location>
        <begin position="875"/>
        <end position="971"/>
    </location>
</feature>
<feature type="disulfide bond" evidence="3">
    <location>
        <begin position="890"/>
        <end position="1084"/>
    </location>
</feature>
<feature type="disulfide bond" evidence="3">
    <location>
        <begin position="896"/>
        <end position="944"/>
    </location>
</feature>
<feature type="disulfide bond" evidence="3">
    <location>
        <begin position="902"/>
        <end position="951"/>
    </location>
</feature>
<feature type="disulfide bond" evidence="3">
    <location>
        <begin position="907"/>
        <end position="933"/>
    </location>
</feature>
<feature type="disulfide bond" evidence="3">
    <location>
        <begin position="937"/>
        <end position="942"/>
    </location>
</feature>
<feature type="disulfide bond" evidence="3">
    <location>
        <begin position="1053"/>
        <end position="1066"/>
    </location>
</feature>
<feature type="disulfide bond" evidence="3">
    <location>
        <begin position="1148"/>
        <end position="1220"/>
    </location>
</feature>
<feature type="disulfide bond" evidence="3">
    <location>
        <begin position="1158"/>
        <end position="1161"/>
    </location>
</feature>
<feature type="disulfide bond" evidence="3">
    <location>
        <begin position="1168"/>
        <end position="1202"/>
    </location>
</feature>
<accession>P03517</accession>
<proteinExistence type="inferred from homology"/>
<sequence>MIFTILNVLTRAMLVMSMYSLTTWDSTSRNDMCFSNDSPLEGLVYYWETHSKRHDYKKQESQRCRVGDSDKKMITNVTIISLISEIQKSISELSLSCVNDDNSTGQVLTFNGLEDTIRGDYIVDCVTGLYQSDIGVGVGLGRTHHGHQQMKNKAVVIDEKERMISLLETQQSENDIKMQVLMSEIEQLKNQLSKKRNERGQEKRDAEKVMSDLMARNSDLRKHNDILTAEISQMKNKNTIQRNKNTVSTTVVPAILSVALLSSSVAPIIAAPPDSPMINPWPHAKNRVGTGMYKYDENDDSGCRPIRYGVSCIGFDFMLKMDKYPFFNAFIGHKTPLESFADKIIEKEEETCEIGTNKEFKCFEERAYIKGTCPTNINAVHYIDNKGKLRYVKCKENLEMTEDCAFCRKIKKKAGQSVQVQKTSVPLQDAICQENSDTYSGPKIPFKGVCKIGLIKYKECKFKTSSYETVSFITLKEKGKIYIEHLMLKNIEVVTNVSFVCYEHVGQDEQEVEHRALKRVSVNDCKIVDNSKQKICTGDHVFCEKYDCSTSYPDVTCIHAPGSGPLYINLMGSWIKPQCVGYERVLVDREVKQPLLAPEQNCDTCVSECLDEGVHIKSTGFEITSAVACSHGSCISAHQEPSTSVIVPYPGLLASVGGRIGIHLSHTSDSASVHMVVVCPPRDSCAAHNCLLCYHGILNYQCHSTLSAILTSFLLILFIYTVFSVTTNILYVLRLIPKQLKSPVGWLKLFINWLLTALRIKTRNVMRRINQRIGWVDHHDVERPRHREPMRRFKTTLLLTLIMMTGGNACSNTVVANSKQTRCVQEGSNTKCSITATITLRAGVIGAESCFIIKGPMENQQKTISIKTISSETVCREGSSFWTSLYIPSCLSSRRCHLVGDCVGNKCQSWRDDQLSREFSGVKDNHIMNENKCFEQCGAIGCGCFNINPSCLYVHAYLKSARNEAVRVFSCSDWVHRVSFEVKGPDGETELVTLGSPGTKFLNWGTLSLSLDAEGISGTNSISFLESSKGGFALYDEGYNEIPREGFLGEIRCSSESAAISAHKSCIRAPGLIKYKPMTDQIECTASLVDPFAIFLKGSLPQTRNGQTFTSTKDKKTVQAFTNGAIKALLSINLDDHEIVFINKVKNCDATFLNVSGCYSCDYGAHVCVKVKSSESADFFAESEDKTTVLSFPIQSGTHDYCQVLHFQKPLVDERLSYSCGSEPKLIVIKGTLVCMGVYDFRNKTGGSSTVVNPSEGAWSISNWFSGLLDWLGGPMKAILKILGFIAIGIVCFVLFMILIRIAVNSINIKKKN</sequence>
<organism>
    <name type="scientific">Punta toro phlebovirus</name>
    <dbReference type="NCBI Taxonomy" id="11587"/>
    <lineage>
        <taxon>Viruses</taxon>
        <taxon>Riboviria</taxon>
        <taxon>Orthornavirae</taxon>
        <taxon>Negarnaviricota</taxon>
        <taxon>Polyploviricotina</taxon>
        <taxon>Ellioviricetes</taxon>
        <taxon>Bunyavirales</taxon>
        <taxon>Phenuiviridae</taxon>
        <taxon>Phlebovirus</taxon>
        <taxon>Phlebovirus toroense</taxon>
    </lineage>
</organism>
<keyword id="KW-0175">Coiled coil</keyword>
<keyword id="KW-1015">Disulfide bond</keyword>
<keyword id="KW-1170">Fusion of virus membrane with host endosomal membrane</keyword>
<keyword id="KW-1168">Fusion of virus membrane with host membrane</keyword>
<keyword id="KW-0325">Glycoprotein</keyword>
<keyword id="KW-1038">Host endoplasmic reticulum</keyword>
<keyword id="KW-1040">Host Golgi apparatus</keyword>
<keyword id="KW-1043">Host membrane</keyword>
<keyword id="KW-0945">Host-virus interaction</keyword>
<keyword id="KW-0472">Membrane</keyword>
<keyword id="KW-0732">Signal</keyword>
<keyword id="KW-0812">Transmembrane</keyword>
<keyword id="KW-1133">Transmembrane helix</keyword>
<keyword id="KW-1161">Viral attachment to host cell</keyword>
<keyword id="KW-1234">Viral attachment to host entry receptor</keyword>
<keyword id="KW-1162">Viral penetration into host cytoplasm</keyword>
<keyword id="KW-0946">Virion</keyword>
<keyword id="KW-1160">Virus entry into host cell</keyword>
<dbReference type="EMBL" id="M11156">
    <property type="protein sequence ID" value="AAA47110.1"/>
    <property type="molecule type" value="Genomic_RNA"/>
</dbReference>
<dbReference type="PIR" id="A04109">
    <property type="entry name" value="VGVUPT"/>
</dbReference>
<dbReference type="SMR" id="P03517"/>
<dbReference type="GlyCosmos" id="P03517">
    <property type="glycosylation" value="5 sites, No reported glycans"/>
</dbReference>
<dbReference type="GO" id="GO:0044167">
    <property type="term" value="C:host cell endoplasmic reticulum membrane"/>
    <property type="evidence" value="ECO:0007669"/>
    <property type="project" value="UniProtKB-SubCell"/>
</dbReference>
<dbReference type="GO" id="GO:0044178">
    <property type="term" value="C:host cell Golgi membrane"/>
    <property type="evidence" value="ECO:0007669"/>
    <property type="project" value="UniProtKB-SubCell"/>
</dbReference>
<dbReference type="GO" id="GO:0016020">
    <property type="term" value="C:membrane"/>
    <property type="evidence" value="ECO:0007669"/>
    <property type="project" value="UniProtKB-KW"/>
</dbReference>
<dbReference type="GO" id="GO:0055036">
    <property type="term" value="C:virion membrane"/>
    <property type="evidence" value="ECO:0007669"/>
    <property type="project" value="UniProtKB-SubCell"/>
</dbReference>
<dbReference type="GO" id="GO:0098670">
    <property type="term" value="P:entry receptor-mediated virion attachment to host cell"/>
    <property type="evidence" value="ECO:0007669"/>
    <property type="project" value="UniProtKB-KW"/>
</dbReference>
<dbReference type="GO" id="GO:0039654">
    <property type="term" value="P:fusion of virus membrane with host endosome membrane"/>
    <property type="evidence" value="ECO:0007669"/>
    <property type="project" value="UniProtKB-KW"/>
</dbReference>
<dbReference type="GO" id="GO:0046718">
    <property type="term" value="P:symbiont entry into host cell"/>
    <property type="evidence" value="ECO:0007669"/>
    <property type="project" value="UniProtKB-KW"/>
</dbReference>
<dbReference type="Gene3D" id="2.60.40.3770">
    <property type="match status" value="1"/>
</dbReference>
<dbReference type="Gene3D" id="2.60.98.50">
    <property type="match status" value="3"/>
</dbReference>
<dbReference type="InterPro" id="IPR016404">
    <property type="entry name" value="M_polyprot_prcur_phlebovir"/>
</dbReference>
<dbReference type="InterPro" id="IPR043603">
    <property type="entry name" value="Phlebo_G2_C"/>
</dbReference>
<dbReference type="InterPro" id="IPR010826">
    <property type="entry name" value="Phlebovirus_G1"/>
</dbReference>
<dbReference type="InterPro" id="IPR009878">
    <property type="entry name" value="Phlebovirus_G2_fusion"/>
</dbReference>
<dbReference type="InterPro" id="IPR009879">
    <property type="entry name" value="Phlebovirus_NSM"/>
</dbReference>
<dbReference type="Pfam" id="PF19019">
    <property type="entry name" value="Phlebo_G2_C"/>
    <property type="match status" value="1"/>
</dbReference>
<dbReference type="Pfam" id="PF07243">
    <property type="entry name" value="Phlebovirus_G1"/>
    <property type="match status" value="1"/>
</dbReference>
<dbReference type="Pfam" id="PF07245">
    <property type="entry name" value="Phlebovirus_G2"/>
    <property type="match status" value="1"/>
</dbReference>
<dbReference type="Pfam" id="PF07246">
    <property type="entry name" value="Phlebovirus_NSM"/>
    <property type="match status" value="1"/>
</dbReference>
<dbReference type="PIRSF" id="PIRSF003961">
    <property type="entry name" value="M_poly_PhleboV"/>
    <property type="match status" value="1"/>
</dbReference>
<name>GP_PTPV</name>